<name>ISPT_NEIMB</name>
<evidence type="ECO:0000255" key="1">
    <source>
        <dbReference type="HAMAP-Rule" id="MF_01139"/>
    </source>
</evidence>
<feature type="chain" id="PRO_0000123644" description="Isoprenyl transferase">
    <location>
        <begin position="1"/>
        <end position="248"/>
    </location>
</feature>
<feature type="active site" evidence="1">
    <location>
        <position position="23"/>
    </location>
</feature>
<feature type="active site" description="Proton acceptor" evidence="1">
    <location>
        <position position="71"/>
    </location>
</feature>
<feature type="binding site" evidence="1">
    <location>
        <position position="23"/>
    </location>
    <ligand>
        <name>Mg(2+)</name>
        <dbReference type="ChEBI" id="CHEBI:18420"/>
    </ligand>
</feature>
<feature type="binding site" evidence="1">
    <location>
        <begin position="24"/>
        <end position="27"/>
    </location>
    <ligand>
        <name>substrate</name>
    </ligand>
</feature>
<feature type="binding site" evidence="1">
    <location>
        <position position="28"/>
    </location>
    <ligand>
        <name>substrate</name>
    </ligand>
</feature>
<feature type="binding site" evidence="1">
    <location>
        <position position="36"/>
    </location>
    <ligand>
        <name>substrate</name>
    </ligand>
</feature>
<feature type="binding site" evidence="1">
    <location>
        <position position="40"/>
    </location>
    <ligand>
        <name>substrate</name>
    </ligand>
</feature>
<feature type="binding site" evidence="1">
    <location>
        <begin position="68"/>
        <end position="70"/>
    </location>
    <ligand>
        <name>substrate</name>
    </ligand>
</feature>
<feature type="binding site" evidence="1">
    <location>
        <position position="72"/>
    </location>
    <ligand>
        <name>substrate</name>
    </ligand>
</feature>
<feature type="binding site" evidence="1">
    <location>
        <position position="74"/>
    </location>
    <ligand>
        <name>substrate</name>
    </ligand>
</feature>
<feature type="binding site" evidence="1">
    <location>
        <position position="185"/>
    </location>
    <ligand>
        <name>substrate</name>
    </ligand>
</feature>
<feature type="binding site" evidence="1">
    <location>
        <begin position="191"/>
        <end position="193"/>
    </location>
    <ligand>
        <name>substrate</name>
    </ligand>
</feature>
<feature type="binding site" evidence="1">
    <location>
        <position position="204"/>
    </location>
    <ligand>
        <name>Mg(2+)</name>
        <dbReference type="ChEBI" id="CHEBI:18420"/>
    </ligand>
</feature>
<comment type="function">
    <text evidence="1">Catalyzes the condensation of isopentenyl diphosphate (IPP) with allylic pyrophosphates generating different type of terpenoids.</text>
</comment>
<comment type="cofactor">
    <cofactor evidence="1">
        <name>Mg(2+)</name>
        <dbReference type="ChEBI" id="CHEBI:18420"/>
    </cofactor>
    <text evidence="1">Binds 2 magnesium ions per subunit.</text>
</comment>
<comment type="subunit">
    <text evidence="1">Homodimer.</text>
</comment>
<comment type="similarity">
    <text evidence="1">Belongs to the UPP synthase family.</text>
</comment>
<reference key="1">
    <citation type="journal article" date="2000" name="Science">
        <title>Complete genome sequence of Neisseria meningitidis serogroup B strain MC58.</title>
        <authorList>
            <person name="Tettelin H."/>
            <person name="Saunders N.J."/>
            <person name="Heidelberg J.F."/>
            <person name="Jeffries A.C."/>
            <person name="Nelson K.E."/>
            <person name="Eisen J.A."/>
            <person name="Ketchum K.A."/>
            <person name="Hood D.W."/>
            <person name="Peden J.F."/>
            <person name="Dodson R.J."/>
            <person name="Nelson W.C."/>
            <person name="Gwinn M.L."/>
            <person name="DeBoy R.T."/>
            <person name="Peterson J.D."/>
            <person name="Hickey E.K."/>
            <person name="Haft D.H."/>
            <person name="Salzberg S.L."/>
            <person name="White O."/>
            <person name="Fleischmann R.D."/>
            <person name="Dougherty B.A."/>
            <person name="Mason T.M."/>
            <person name="Ciecko A."/>
            <person name="Parksey D.S."/>
            <person name="Blair E."/>
            <person name="Cittone H."/>
            <person name="Clark E.B."/>
            <person name="Cotton M.D."/>
            <person name="Utterback T.R."/>
            <person name="Khouri H.M."/>
            <person name="Qin H."/>
            <person name="Vamathevan J.J."/>
            <person name="Gill J."/>
            <person name="Scarlato V."/>
            <person name="Masignani V."/>
            <person name="Pizza M."/>
            <person name="Grandi G."/>
            <person name="Sun L."/>
            <person name="Smith H.O."/>
            <person name="Fraser C.M."/>
            <person name="Moxon E.R."/>
            <person name="Rappuoli R."/>
            <person name="Venter J.C."/>
        </authorList>
    </citation>
    <scope>NUCLEOTIDE SEQUENCE [LARGE SCALE GENOMIC DNA]</scope>
    <source>
        <strain>ATCC BAA-335 / MC58</strain>
    </source>
</reference>
<gene>
    <name evidence="1" type="primary">uppS</name>
    <name type="ordered locus">NMB0186</name>
</gene>
<accession>Q9K1G6</accession>
<protein>
    <recommendedName>
        <fullName evidence="1">Isoprenyl transferase</fullName>
        <ecNumber evidence="1">2.5.1.-</ecNumber>
    </recommendedName>
</protein>
<dbReference type="EC" id="2.5.1.-" evidence="1"/>
<dbReference type="EMBL" id="AE002098">
    <property type="protein sequence ID" value="AAF40643.1"/>
    <property type="molecule type" value="Genomic_DNA"/>
</dbReference>
<dbReference type="PIR" id="C81229">
    <property type="entry name" value="C81229"/>
</dbReference>
<dbReference type="RefSeq" id="NP_273244.1">
    <property type="nucleotide sequence ID" value="NC_003112.2"/>
</dbReference>
<dbReference type="RefSeq" id="WP_002218592.1">
    <property type="nucleotide sequence ID" value="NC_003112.2"/>
</dbReference>
<dbReference type="SMR" id="Q9K1G6"/>
<dbReference type="FunCoup" id="Q9K1G6">
    <property type="interactions" value="452"/>
</dbReference>
<dbReference type="STRING" id="122586.NMB0186"/>
<dbReference type="PaxDb" id="122586-NMB0186"/>
<dbReference type="KEGG" id="nme:NMB0186"/>
<dbReference type="PATRIC" id="fig|122586.8.peg.228"/>
<dbReference type="HOGENOM" id="CLU_038505_1_1_4"/>
<dbReference type="InParanoid" id="Q9K1G6"/>
<dbReference type="OrthoDB" id="4191603at2"/>
<dbReference type="Proteomes" id="UP000000425">
    <property type="component" value="Chromosome"/>
</dbReference>
<dbReference type="GO" id="GO:0005829">
    <property type="term" value="C:cytosol"/>
    <property type="evidence" value="ECO:0000318"/>
    <property type="project" value="GO_Central"/>
</dbReference>
<dbReference type="GO" id="GO:0008834">
    <property type="term" value="F:ditrans,polycis-undecaprenyl-diphosphate synthase [(2E,6E)-farnesyl-diphosphate specific] activity"/>
    <property type="evidence" value="ECO:0000318"/>
    <property type="project" value="GO_Central"/>
</dbReference>
<dbReference type="GO" id="GO:0000287">
    <property type="term" value="F:magnesium ion binding"/>
    <property type="evidence" value="ECO:0000318"/>
    <property type="project" value="GO_Central"/>
</dbReference>
<dbReference type="GO" id="GO:0016094">
    <property type="term" value="P:polyprenol biosynthetic process"/>
    <property type="evidence" value="ECO:0000318"/>
    <property type="project" value="GO_Central"/>
</dbReference>
<dbReference type="CDD" id="cd00475">
    <property type="entry name" value="Cis_IPPS"/>
    <property type="match status" value="1"/>
</dbReference>
<dbReference type="FunFam" id="3.40.1180.10:FF:000001">
    <property type="entry name" value="(2E,6E)-farnesyl-diphosphate-specific ditrans,polycis-undecaprenyl-diphosphate synthase"/>
    <property type="match status" value="1"/>
</dbReference>
<dbReference type="Gene3D" id="3.40.1180.10">
    <property type="entry name" value="Decaprenyl diphosphate synthase-like"/>
    <property type="match status" value="1"/>
</dbReference>
<dbReference type="HAMAP" id="MF_01139">
    <property type="entry name" value="ISPT"/>
    <property type="match status" value="1"/>
</dbReference>
<dbReference type="InterPro" id="IPR001441">
    <property type="entry name" value="UPP_synth-like"/>
</dbReference>
<dbReference type="InterPro" id="IPR018520">
    <property type="entry name" value="UPP_synth-like_CS"/>
</dbReference>
<dbReference type="InterPro" id="IPR036424">
    <property type="entry name" value="UPP_synth-like_sf"/>
</dbReference>
<dbReference type="NCBIfam" id="NF011405">
    <property type="entry name" value="PRK14830.1"/>
    <property type="match status" value="1"/>
</dbReference>
<dbReference type="NCBIfam" id="TIGR00055">
    <property type="entry name" value="uppS"/>
    <property type="match status" value="1"/>
</dbReference>
<dbReference type="PANTHER" id="PTHR10291:SF0">
    <property type="entry name" value="DEHYDRODOLICHYL DIPHOSPHATE SYNTHASE 2"/>
    <property type="match status" value="1"/>
</dbReference>
<dbReference type="PANTHER" id="PTHR10291">
    <property type="entry name" value="DEHYDRODOLICHYL DIPHOSPHATE SYNTHASE FAMILY MEMBER"/>
    <property type="match status" value="1"/>
</dbReference>
<dbReference type="Pfam" id="PF01255">
    <property type="entry name" value="Prenyltransf"/>
    <property type="match status" value="1"/>
</dbReference>
<dbReference type="SUPFAM" id="SSF64005">
    <property type="entry name" value="Undecaprenyl diphosphate synthase"/>
    <property type="match status" value="1"/>
</dbReference>
<dbReference type="PROSITE" id="PS01066">
    <property type="entry name" value="UPP_SYNTHASE"/>
    <property type="match status" value="1"/>
</dbReference>
<keyword id="KW-0460">Magnesium</keyword>
<keyword id="KW-0479">Metal-binding</keyword>
<keyword id="KW-1185">Reference proteome</keyword>
<keyword id="KW-0808">Transferase</keyword>
<sequence>MKSSTQAVLEHTAIPKHIAVIMDGNGRWAKKRFLPRIMGHKRGLDALENMVKHCAKLGVQYLTVFAFSTENWRRPEDEVSFLMGLFLQALQKQVRRLHENNMRLKILGSRERFNRQILQGIEEAEALTANNTGLTLSIAADYGGRWDILQAANKLIAEGVSEITEDTLAKHLMLGDAPEPDLFIRTGGETRISNFLLWQMAYAELYFTDILWPDFDGKALDDAVASFQKRERRFGRTSEQLPIEQQRN</sequence>
<proteinExistence type="inferred from homology"/>
<organism>
    <name type="scientific">Neisseria meningitidis serogroup B (strain ATCC BAA-335 / MC58)</name>
    <dbReference type="NCBI Taxonomy" id="122586"/>
    <lineage>
        <taxon>Bacteria</taxon>
        <taxon>Pseudomonadati</taxon>
        <taxon>Pseudomonadota</taxon>
        <taxon>Betaproteobacteria</taxon>
        <taxon>Neisseriales</taxon>
        <taxon>Neisseriaceae</taxon>
        <taxon>Neisseria</taxon>
    </lineage>
</organism>